<sequence>MPTREIRHPLIRHKIGLMRRADISTKNFRELAQEVGALLTYEATNDLPLESYEIEGWAGAVQVEKIAGKKITVVPILRAGIGMLDGVLSLIPGAKVSAVGVARNEETLEAHTYLEKLAPEIDSRLALIIDPMLATGGSMVATIDLLKKAGCKDIRAMVLVAAPEGIKAVEQAHPDVTIFTASIDQRLNEHGYIIPGLGDAGDKIFGTKQKDA</sequence>
<keyword id="KW-0021">Allosteric enzyme</keyword>
<keyword id="KW-0328">Glycosyltransferase</keyword>
<keyword id="KW-0342">GTP-binding</keyword>
<keyword id="KW-0460">Magnesium</keyword>
<keyword id="KW-0547">Nucleotide-binding</keyword>
<keyword id="KW-0808">Transferase</keyword>
<organism>
    <name type="scientific">Ectopseudomonas mendocina (strain ymp)</name>
    <name type="common">Pseudomonas mendocina</name>
    <dbReference type="NCBI Taxonomy" id="399739"/>
    <lineage>
        <taxon>Bacteria</taxon>
        <taxon>Pseudomonadati</taxon>
        <taxon>Pseudomonadota</taxon>
        <taxon>Gammaproteobacteria</taxon>
        <taxon>Pseudomonadales</taxon>
        <taxon>Pseudomonadaceae</taxon>
        <taxon>Ectopseudomonas</taxon>
    </lineage>
</organism>
<evidence type="ECO:0000255" key="1">
    <source>
        <dbReference type="HAMAP-Rule" id="MF_01218"/>
    </source>
</evidence>
<reference key="1">
    <citation type="submission" date="2007-04" db="EMBL/GenBank/DDBJ databases">
        <title>Complete sequence of Pseudomonas mendocina ymp.</title>
        <authorList>
            <consortium name="US DOE Joint Genome Institute"/>
            <person name="Copeland A."/>
            <person name="Lucas S."/>
            <person name="Lapidus A."/>
            <person name="Barry K."/>
            <person name="Glavina del Rio T."/>
            <person name="Dalin E."/>
            <person name="Tice H."/>
            <person name="Pitluck S."/>
            <person name="Kiss H."/>
            <person name="Brettin T."/>
            <person name="Detter J.C."/>
            <person name="Bruce D."/>
            <person name="Han C."/>
            <person name="Schmutz J."/>
            <person name="Larimer F."/>
            <person name="Land M."/>
            <person name="Hauser L."/>
            <person name="Kyrpides N."/>
            <person name="Mikhailova N."/>
            <person name="Hersman L."/>
            <person name="Dubois J."/>
            <person name="Maurice P."/>
            <person name="Richardson P."/>
        </authorList>
    </citation>
    <scope>NUCLEOTIDE SEQUENCE [LARGE SCALE GENOMIC DNA]</scope>
    <source>
        <strain>ymp</strain>
    </source>
</reference>
<accession>A4XQU8</accession>
<dbReference type="EC" id="2.4.2.9" evidence="1"/>
<dbReference type="EMBL" id="CP000680">
    <property type="protein sequence ID" value="ABP83714.1"/>
    <property type="molecule type" value="Genomic_DNA"/>
</dbReference>
<dbReference type="SMR" id="A4XQU8"/>
<dbReference type="STRING" id="399739.Pmen_0946"/>
<dbReference type="KEGG" id="pmy:Pmen_0946"/>
<dbReference type="PATRIC" id="fig|399739.8.peg.955"/>
<dbReference type="eggNOG" id="COG0035">
    <property type="taxonomic scope" value="Bacteria"/>
</dbReference>
<dbReference type="HOGENOM" id="CLU_067096_2_2_6"/>
<dbReference type="OrthoDB" id="9781675at2"/>
<dbReference type="UniPathway" id="UPA00574">
    <property type="reaction ID" value="UER00636"/>
</dbReference>
<dbReference type="GO" id="GO:0005525">
    <property type="term" value="F:GTP binding"/>
    <property type="evidence" value="ECO:0007669"/>
    <property type="project" value="UniProtKB-KW"/>
</dbReference>
<dbReference type="GO" id="GO:0000287">
    <property type="term" value="F:magnesium ion binding"/>
    <property type="evidence" value="ECO:0007669"/>
    <property type="project" value="UniProtKB-UniRule"/>
</dbReference>
<dbReference type="GO" id="GO:0004845">
    <property type="term" value="F:uracil phosphoribosyltransferase activity"/>
    <property type="evidence" value="ECO:0007669"/>
    <property type="project" value="UniProtKB-UniRule"/>
</dbReference>
<dbReference type="GO" id="GO:0044206">
    <property type="term" value="P:UMP salvage"/>
    <property type="evidence" value="ECO:0007669"/>
    <property type="project" value="UniProtKB-UniRule"/>
</dbReference>
<dbReference type="GO" id="GO:0006223">
    <property type="term" value="P:uracil salvage"/>
    <property type="evidence" value="ECO:0007669"/>
    <property type="project" value="InterPro"/>
</dbReference>
<dbReference type="CDD" id="cd06223">
    <property type="entry name" value="PRTases_typeI"/>
    <property type="match status" value="1"/>
</dbReference>
<dbReference type="FunFam" id="3.40.50.2020:FF:000003">
    <property type="entry name" value="Uracil phosphoribosyltransferase"/>
    <property type="match status" value="1"/>
</dbReference>
<dbReference type="Gene3D" id="3.40.50.2020">
    <property type="match status" value="1"/>
</dbReference>
<dbReference type="HAMAP" id="MF_01218_B">
    <property type="entry name" value="Upp_B"/>
    <property type="match status" value="1"/>
</dbReference>
<dbReference type="InterPro" id="IPR000836">
    <property type="entry name" value="PRibTrfase_dom"/>
</dbReference>
<dbReference type="InterPro" id="IPR029057">
    <property type="entry name" value="PRTase-like"/>
</dbReference>
<dbReference type="InterPro" id="IPR034332">
    <property type="entry name" value="Upp_B"/>
</dbReference>
<dbReference type="InterPro" id="IPR050054">
    <property type="entry name" value="UPRTase/APRTase"/>
</dbReference>
<dbReference type="InterPro" id="IPR005765">
    <property type="entry name" value="Ura_phspho_trans"/>
</dbReference>
<dbReference type="NCBIfam" id="NF001097">
    <property type="entry name" value="PRK00129.1"/>
    <property type="match status" value="1"/>
</dbReference>
<dbReference type="NCBIfam" id="TIGR01091">
    <property type="entry name" value="upp"/>
    <property type="match status" value="1"/>
</dbReference>
<dbReference type="PANTHER" id="PTHR32315">
    <property type="entry name" value="ADENINE PHOSPHORIBOSYLTRANSFERASE"/>
    <property type="match status" value="1"/>
</dbReference>
<dbReference type="PANTHER" id="PTHR32315:SF4">
    <property type="entry name" value="URACIL PHOSPHORIBOSYLTRANSFERASE, CHLOROPLASTIC"/>
    <property type="match status" value="1"/>
</dbReference>
<dbReference type="Pfam" id="PF14681">
    <property type="entry name" value="UPRTase"/>
    <property type="match status" value="1"/>
</dbReference>
<dbReference type="SUPFAM" id="SSF53271">
    <property type="entry name" value="PRTase-like"/>
    <property type="match status" value="1"/>
</dbReference>
<name>UPP_ECTM1</name>
<proteinExistence type="inferred from homology"/>
<feature type="chain" id="PRO_1000053764" description="Uracil phosphoribosyltransferase">
    <location>
        <begin position="1"/>
        <end position="212"/>
    </location>
</feature>
<feature type="binding site" evidence="1">
    <location>
        <position position="78"/>
    </location>
    <ligand>
        <name>5-phospho-alpha-D-ribose 1-diphosphate</name>
        <dbReference type="ChEBI" id="CHEBI:58017"/>
    </ligand>
</feature>
<feature type="binding site" evidence="1">
    <location>
        <position position="103"/>
    </location>
    <ligand>
        <name>5-phospho-alpha-D-ribose 1-diphosphate</name>
        <dbReference type="ChEBI" id="CHEBI:58017"/>
    </ligand>
</feature>
<feature type="binding site" evidence="1">
    <location>
        <begin position="130"/>
        <end position="138"/>
    </location>
    <ligand>
        <name>5-phospho-alpha-D-ribose 1-diphosphate</name>
        <dbReference type="ChEBI" id="CHEBI:58017"/>
    </ligand>
</feature>
<feature type="binding site" evidence="1">
    <location>
        <position position="193"/>
    </location>
    <ligand>
        <name>uracil</name>
        <dbReference type="ChEBI" id="CHEBI:17568"/>
    </ligand>
</feature>
<feature type="binding site" evidence="1">
    <location>
        <begin position="198"/>
        <end position="200"/>
    </location>
    <ligand>
        <name>uracil</name>
        <dbReference type="ChEBI" id="CHEBI:17568"/>
    </ligand>
</feature>
<feature type="binding site" evidence="1">
    <location>
        <position position="199"/>
    </location>
    <ligand>
        <name>5-phospho-alpha-D-ribose 1-diphosphate</name>
        <dbReference type="ChEBI" id="CHEBI:58017"/>
    </ligand>
</feature>
<gene>
    <name evidence="1" type="primary">upp</name>
    <name type="ordered locus">Pmen_0946</name>
</gene>
<comment type="function">
    <text evidence="1">Catalyzes the conversion of uracil and 5-phospho-alpha-D-ribose 1-diphosphate (PRPP) to UMP and diphosphate.</text>
</comment>
<comment type="catalytic activity">
    <reaction evidence="1">
        <text>UMP + diphosphate = 5-phospho-alpha-D-ribose 1-diphosphate + uracil</text>
        <dbReference type="Rhea" id="RHEA:13017"/>
        <dbReference type="ChEBI" id="CHEBI:17568"/>
        <dbReference type="ChEBI" id="CHEBI:33019"/>
        <dbReference type="ChEBI" id="CHEBI:57865"/>
        <dbReference type="ChEBI" id="CHEBI:58017"/>
        <dbReference type="EC" id="2.4.2.9"/>
    </reaction>
</comment>
<comment type="cofactor">
    <cofactor evidence="1">
        <name>Mg(2+)</name>
        <dbReference type="ChEBI" id="CHEBI:18420"/>
    </cofactor>
    <text evidence="1">Binds 1 Mg(2+) ion per subunit. The magnesium is bound as Mg-PRPP.</text>
</comment>
<comment type="activity regulation">
    <text evidence="1">Allosterically activated by GTP.</text>
</comment>
<comment type="pathway">
    <text evidence="1">Pyrimidine metabolism; UMP biosynthesis via salvage pathway; UMP from uracil: step 1/1.</text>
</comment>
<comment type="similarity">
    <text evidence="1">Belongs to the UPRTase family.</text>
</comment>
<protein>
    <recommendedName>
        <fullName evidence="1">Uracil phosphoribosyltransferase</fullName>
        <ecNumber evidence="1">2.4.2.9</ecNumber>
    </recommendedName>
    <alternativeName>
        <fullName evidence="1">UMP pyrophosphorylase</fullName>
    </alternativeName>
    <alternativeName>
        <fullName evidence="1">UPRTase</fullName>
    </alternativeName>
</protein>